<protein>
    <recommendedName>
        <fullName evidence="1">Elongation factor P-like protein</fullName>
    </recommendedName>
</protein>
<proteinExistence type="inferred from homology"/>
<gene>
    <name evidence="1" type="primary">yeiP</name>
    <name type="ordered locus">EcolC_1476</name>
</gene>
<organism>
    <name type="scientific">Escherichia coli (strain ATCC 8739 / DSM 1576 / NBRC 3972 / NCIMB 8545 / WDCM 00012 / Crooks)</name>
    <dbReference type="NCBI Taxonomy" id="481805"/>
    <lineage>
        <taxon>Bacteria</taxon>
        <taxon>Pseudomonadati</taxon>
        <taxon>Pseudomonadota</taxon>
        <taxon>Gammaproteobacteria</taxon>
        <taxon>Enterobacterales</taxon>
        <taxon>Enterobacteriaceae</taxon>
        <taxon>Escherichia</taxon>
    </lineage>
</organism>
<feature type="chain" id="PRO_1000082713" description="Elongation factor P-like protein">
    <location>
        <begin position="1"/>
        <end position="190"/>
    </location>
</feature>
<name>EFPL_ECOLC</name>
<evidence type="ECO:0000255" key="1">
    <source>
        <dbReference type="HAMAP-Rule" id="MF_00646"/>
    </source>
</evidence>
<sequence>MPRANEIKKGMVLNYNGKLLLVKDIDIQSPTARGAATLYKMRFSDVRTGLKVEERFKGDDIVDTVTLTRRYVDFSYVDGNEYVFMDKEDYTPYTFTKDQIEEELLFMPEGGMPDMQVLTWDGQLLALELPQTVDLEIVETAPGIKGASASARNKPATLSTGLVIQVPEYLSPGEKIRIHIEERRYMGRAD</sequence>
<dbReference type="EMBL" id="CP000946">
    <property type="protein sequence ID" value="ACA77139.1"/>
    <property type="molecule type" value="Genomic_DNA"/>
</dbReference>
<dbReference type="RefSeq" id="WP_001136827.1">
    <property type="nucleotide sequence ID" value="NZ_MTFT01000031.1"/>
</dbReference>
<dbReference type="SMR" id="B1IY98"/>
<dbReference type="GeneID" id="93775010"/>
<dbReference type="KEGG" id="ecl:EcolC_1476"/>
<dbReference type="HOGENOM" id="CLU_074944_2_0_6"/>
<dbReference type="GO" id="GO:0005829">
    <property type="term" value="C:cytosol"/>
    <property type="evidence" value="ECO:0007669"/>
    <property type="project" value="UniProtKB-ARBA"/>
</dbReference>
<dbReference type="GO" id="GO:0003746">
    <property type="term" value="F:translation elongation factor activity"/>
    <property type="evidence" value="ECO:0007669"/>
    <property type="project" value="UniProtKB-UniRule"/>
</dbReference>
<dbReference type="GO" id="GO:0043043">
    <property type="term" value="P:peptide biosynthetic process"/>
    <property type="evidence" value="ECO:0007669"/>
    <property type="project" value="InterPro"/>
</dbReference>
<dbReference type="CDD" id="cd04470">
    <property type="entry name" value="S1_EF-P_repeat_1"/>
    <property type="match status" value="1"/>
</dbReference>
<dbReference type="CDD" id="cd05794">
    <property type="entry name" value="S1_EF-P_repeat_2"/>
    <property type="match status" value="1"/>
</dbReference>
<dbReference type="FunFam" id="2.40.50.140:FF:000004">
    <property type="entry name" value="Elongation factor P"/>
    <property type="match status" value="1"/>
</dbReference>
<dbReference type="FunFam" id="2.30.30.30:FF:000011">
    <property type="entry name" value="Elongation factor P-like protein"/>
    <property type="match status" value="1"/>
</dbReference>
<dbReference type="FunFam" id="2.40.50.140:FF:000053">
    <property type="entry name" value="Elongation factor P-like protein"/>
    <property type="match status" value="1"/>
</dbReference>
<dbReference type="Gene3D" id="2.30.30.30">
    <property type="match status" value="1"/>
</dbReference>
<dbReference type="Gene3D" id="2.40.50.140">
    <property type="entry name" value="Nucleic acid-binding proteins"/>
    <property type="match status" value="2"/>
</dbReference>
<dbReference type="HAMAP" id="MF_00646">
    <property type="entry name" value="EFP"/>
    <property type="match status" value="1"/>
</dbReference>
<dbReference type="InterPro" id="IPR015365">
    <property type="entry name" value="Elong-fact-P_C"/>
</dbReference>
<dbReference type="InterPro" id="IPR012340">
    <property type="entry name" value="NA-bd_OB-fold"/>
</dbReference>
<dbReference type="InterPro" id="IPR014722">
    <property type="entry name" value="Rib_uL2_dom2"/>
</dbReference>
<dbReference type="InterPro" id="IPR020599">
    <property type="entry name" value="Transl_elong_fac_P/YeiP"/>
</dbReference>
<dbReference type="InterPro" id="IPR013185">
    <property type="entry name" value="Transl_elong_KOW-like"/>
</dbReference>
<dbReference type="InterPro" id="IPR011897">
    <property type="entry name" value="Transl_elong_p-like_YeiP"/>
</dbReference>
<dbReference type="InterPro" id="IPR001059">
    <property type="entry name" value="Transl_elong_P/YeiP_cen"/>
</dbReference>
<dbReference type="InterPro" id="IPR013852">
    <property type="entry name" value="Transl_elong_P/YeiP_CS"/>
</dbReference>
<dbReference type="InterPro" id="IPR008991">
    <property type="entry name" value="Translation_prot_SH3-like_sf"/>
</dbReference>
<dbReference type="NCBIfam" id="NF001810">
    <property type="entry name" value="PRK00529.1"/>
    <property type="match status" value="1"/>
</dbReference>
<dbReference type="NCBIfam" id="NF003392">
    <property type="entry name" value="PRK04542.1"/>
    <property type="match status" value="1"/>
</dbReference>
<dbReference type="NCBIfam" id="TIGR02178">
    <property type="entry name" value="yeiP"/>
    <property type="match status" value="1"/>
</dbReference>
<dbReference type="PANTHER" id="PTHR30053">
    <property type="entry name" value="ELONGATION FACTOR P"/>
    <property type="match status" value="1"/>
</dbReference>
<dbReference type="PANTHER" id="PTHR30053:SF14">
    <property type="entry name" value="TRANSLATION ELONGATION FACTOR KOW-LIKE DOMAIN-CONTAINING PROTEIN"/>
    <property type="match status" value="1"/>
</dbReference>
<dbReference type="Pfam" id="PF01132">
    <property type="entry name" value="EFP"/>
    <property type="match status" value="1"/>
</dbReference>
<dbReference type="Pfam" id="PF08207">
    <property type="entry name" value="EFP_N"/>
    <property type="match status" value="1"/>
</dbReference>
<dbReference type="Pfam" id="PF09285">
    <property type="entry name" value="Elong-fact-P_C"/>
    <property type="match status" value="1"/>
</dbReference>
<dbReference type="PIRSF" id="PIRSF005901">
    <property type="entry name" value="EF-P"/>
    <property type="match status" value="1"/>
</dbReference>
<dbReference type="SMART" id="SM01185">
    <property type="entry name" value="EFP"/>
    <property type="match status" value="1"/>
</dbReference>
<dbReference type="SMART" id="SM00841">
    <property type="entry name" value="Elong-fact-P_C"/>
    <property type="match status" value="1"/>
</dbReference>
<dbReference type="SUPFAM" id="SSF50249">
    <property type="entry name" value="Nucleic acid-binding proteins"/>
    <property type="match status" value="2"/>
</dbReference>
<dbReference type="SUPFAM" id="SSF50104">
    <property type="entry name" value="Translation proteins SH3-like domain"/>
    <property type="match status" value="1"/>
</dbReference>
<dbReference type="PROSITE" id="PS01275">
    <property type="entry name" value="EFP"/>
    <property type="match status" value="1"/>
</dbReference>
<comment type="similarity">
    <text evidence="1">Belongs to the elongation factor P family.</text>
</comment>
<reference key="1">
    <citation type="submission" date="2008-02" db="EMBL/GenBank/DDBJ databases">
        <title>Complete sequence of Escherichia coli C str. ATCC 8739.</title>
        <authorList>
            <person name="Copeland A."/>
            <person name="Lucas S."/>
            <person name="Lapidus A."/>
            <person name="Glavina del Rio T."/>
            <person name="Dalin E."/>
            <person name="Tice H."/>
            <person name="Bruce D."/>
            <person name="Goodwin L."/>
            <person name="Pitluck S."/>
            <person name="Kiss H."/>
            <person name="Brettin T."/>
            <person name="Detter J.C."/>
            <person name="Han C."/>
            <person name="Kuske C.R."/>
            <person name="Schmutz J."/>
            <person name="Larimer F."/>
            <person name="Land M."/>
            <person name="Hauser L."/>
            <person name="Kyrpides N."/>
            <person name="Mikhailova N."/>
            <person name="Ingram L."/>
            <person name="Richardson P."/>
        </authorList>
    </citation>
    <scope>NUCLEOTIDE SEQUENCE [LARGE SCALE GENOMIC DNA]</scope>
    <source>
        <strain>ATCC 8739 / DSM 1576 / NBRC 3972 / NCIMB 8545 / WDCM 00012 / Crooks</strain>
    </source>
</reference>
<accession>B1IY98</accession>